<keyword id="KW-0028">Amino-acid biosynthesis</keyword>
<keyword id="KW-0963">Cytoplasm</keyword>
<keyword id="KW-0554">One-carbon metabolism</keyword>
<keyword id="KW-0663">Pyridoxal phosphate</keyword>
<keyword id="KW-0808">Transferase</keyword>
<gene>
    <name evidence="1" type="primary">glyA</name>
    <name type="ordered locus">BAA_5586</name>
</gene>
<reference key="1">
    <citation type="submission" date="2009-04" db="EMBL/GenBank/DDBJ databases">
        <title>Genome sequence of Bacillus anthracis A0248.</title>
        <authorList>
            <person name="Dodson R.J."/>
            <person name="Munk A.C."/>
            <person name="Bruce D."/>
            <person name="Detter C."/>
            <person name="Tapia R."/>
            <person name="Sutton G."/>
            <person name="Sims D."/>
            <person name="Brettin T."/>
        </authorList>
    </citation>
    <scope>NUCLEOTIDE SEQUENCE [LARGE SCALE GENOMIC DNA]</scope>
    <source>
        <strain>A0248</strain>
    </source>
</reference>
<comment type="function">
    <text evidence="1">Catalyzes the reversible interconversion of serine and glycine with tetrahydrofolate (THF) serving as the one-carbon carrier. This reaction serves as the major source of one-carbon groups required for the biosynthesis of purines, thymidylate, methionine, and other important biomolecules. Also exhibits THF-independent aldolase activity toward beta-hydroxyamino acids, producing glycine and aldehydes, via a retro-aldol mechanism.</text>
</comment>
<comment type="catalytic activity">
    <reaction evidence="1">
        <text>(6R)-5,10-methylene-5,6,7,8-tetrahydrofolate + glycine + H2O = (6S)-5,6,7,8-tetrahydrofolate + L-serine</text>
        <dbReference type="Rhea" id="RHEA:15481"/>
        <dbReference type="ChEBI" id="CHEBI:15377"/>
        <dbReference type="ChEBI" id="CHEBI:15636"/>
        <dbReference type="ChEBI" id="CHEBI:33384"/>
        <dbReference type="ChEBI" id="CHEBI:57305"/>
        <dbReference type="ChEBI" id="CHEBI:57453"/>
        <dbReference type="EC" id="2.1.2.1"/>
    </reaction>
</comment>
<comment type="cofactor">
    <cofactor evidence="1">
        <name>pyridoxal 5'-phosphate</name>
        <dbReference type="ChEBI" id="CHEBI:597326"/>
    </cofactor>
</comment>
<comment type="pathway">
    <text evidence="1">One-carbon metabolism; tetrahydrofolate interconversion.</text>
</comment>
<comment type="pathway">
    <text evidence="1">Amino-acid biosynthesis; glycine biosynthesis; glycine from L-serine: step 1/1.</text>
</comment>
<comment type="subunit">
    <text evidence="1">Homodimer.</text>
</comment>
<comment type="subcellular location">
    <subcellularLocation>
        <location evidence="1">Cytoplasm</location>
    </subcellularLocation>
</comment>
<comment type="similarity">
    <text evidence="1">Belongs to the SHMT family.</text>
</comment>
<protein>
    <recommendedName>
        <fullName evidence="1">Serine hydroxymethyltransferase</fullName>
        <shortName evidence="1">SHMT</shortName>
        <shortName evidence="1">Serine methylase</shortName>
        <ecNumber evidence="1">2.1.2.1</ecNumber>
    </recommendedName>
</protein>
<proteinExistence type="inferred from homology"/>
<feature type="chain" id="PRO_1000195429" description="Serine hydroxymethyltransferase">
    <location>
        <begin position="1"/>
        <end position="413"/>
    </location>
</feature>
<feature type="binding site" evidence="1">
    <location>
        <position position="117"/>
    </location>
    <ligand>
        <name>(6S)-5,6,7,8-tetrahydrofolate</name>
        <dbReference type="ChEBI" id="CHEBI:57453"/>
    </ligand>
</feature>
<feature type="binding site" evidence="1">
    <location>
        <begin position="121"/>
        <end position="123"/>
    </location>
    <ligand>
        <name>(6S)-5,6,7,8-tetrahydrofolate</name>
        <dbReference type="ChEBI" id="CHEBI:57453"/>
    </ligand>
</feature>
<feature type="binding site" evidence="1">
    <location>
        <position position="239"/>
    </location>
    <ligand>
        <name>(6S)-5,6,7,8-tetrahydrofolate</name>
        <dbReference type="ChEBI" id="CHEBI:57453"/>
    </ligand>
</feature>
<feature type="binding site" evidence="1">
    <location>
        <begin position="349"/>
        <end position="351"/>
    </location>
    <ligand>
        <name>(6S)-5,6,7,8-tetrahydrofolate</name>
        <dbReference type="ChEBI" id="CHEBI:57453"/>
    </ligand>
</feature>
<feature type="site" description="Plays an important role in substrate specificity" evidence="1">
    <location>
        <position position="225"/>
    </location>
</feature>
<feature type="modified residue" description="N6-(pyridoxal phosphate)lysine" evidence="1">
    <location>
        <position position="226"/>
    </location>
</feature>
<name>GLYA_BACAA</name>
<organism>
    <name type="scientific">Bacillus anthracis (strain A0248)</name>
    <dbReference type="NCBI Taxonomy" id="592021"/>
    <lineage>
        <taxon>Bacteria</taxon>
        <taxon>Bacillati</taxon>
        <taxon>Bacillota</taxon>
        <taxon>Bacilli</taxon>
        <taxon>Bacillales</taxon>
        <taxon>Bacillaceae</taxon>
        <taxon>Bacillus</taxon>
        <taxon>Bacillus cereus group</taxon>
    </lineage>
</organism>
<sequence length="413" mass="45111">MDHLKRQDEKVFAAIEAELGRQRSKIELIASENFVSEAVMEAQGSVLTNKYAEGYPGKRYYGGCEHVDVVEDIARDRVKEIFGAEHVNVQPHSGAQANMAVYFTILEQGDTVLGMNLSHGGHLTHGSPVNFSGVQYNFVEYGVDAESHCINYDDVLAKAKEHKPKLIVAGASAYPRVIDFKRFREIADEVGAYLMVDMAHIAGLVAAGLHPNPVPHAHFVTTTTHKTLRGPRGGMILCEEQFAKQIDKSIFPGIQGGPLMHVIAAKAVAFGEALQDDFKTYAQNIINNANRLAEGLQKEGLTLVSGGTDNHLILIDVRNLEITGKVAEHVLDEVGITVNKNTIPFETASPFVTSGVRIGTAAVTSRGFGLEDMDEIASLIAYTLKNHENEAALEEARKRVEALTSKFPMYTDL</sequence>
<dbReference type="EC" id="2.1.2.1" evidence="1"/>
<dbReference type="EMBL" id="CP001598">
    <property type="protein sequence ID" value="ACQ47576.1"/>
    <property type="molecule type" value="Genomic_DNA"/>
</dbReference>
<dbReference type="RefSeq" id="WP_000349814.1">
    <property type="nucleotide sequence ID" value="NC_012659.1"/>
</dbReference>
<dbReference type="SMR" id="C3P1G5"/>
<dbReference type="GeneID" id="45025146"/>
<dbReference type="KEGG" id="bai:BAA_5586"/>
<dbReference type="HOGENOM" id="CLU_022477_2_1_9"/>
<dbReference type="UniPathway" id="UPA00193"/>
<dbReference type="UniPathway" id="UPA00288">
    <property type="reaction ID" value="UER01023"/>
</dbReference>
<dbReference type="GO" id="GO:0005829">
    <property type="term" value="C:cytosol"/>
    <property type="evidence" value="ECO:0007669"/>
    <property type="project" value="TreeGrafter"/>
</dbReference>
<dbReference type="GO" id="GO:0004372">
    <property type="term" value="F:glycine hydroxymethyltransferase activity"/>
    <property type="evidence" value="ECO:0007669"/>
    <property type="project" value="UniProtKB-UniRule"/>
</dbReference>
<dbReference type="GO" id="GO:0030170">
    <property type="term" value="F:pyridoxal phosphate binding"/>
    <property type="evidence" value="ECO:0007669"/>
    <property type="project" value="UniProtKB-UniRule"/>
</dbReference>
<dbReference type="GO" id="GO:0019264">
    <property type="term" value="P:glycine biosynthetic process from serine"/>
    <property type="evidence" value="ECO:0007669"/>
    <property type="project" value="UniProtKB-UniRule"/>
</dbReference>
<dbReference type="GO" id="GO:0035999">
    <property type="term" value="P:tetrahydrofolate interconversion"/>
    <property type="evidence" value="ECO:0007669"/>
    <property type="project" value="UniProtKB-UniRule"/>
</dbReference>
<dbReference type="CDD" id="cd00378">
    <property type="entry name" value="SHMT"/>
    <property type="match status" value="1"/>
</dbReference>
<dbReference type="FunFam" id="3.40.640.10:FF:000001">
    <property type="entry name" value="Serine hydroxymethyltransferase"/>
    <property type="match status" value="1"/>
</dbReference>
<dbReference type="FunFam" id="3.90.1150.10:FF:000003">
    <property type="entry name" value="Serine hydroxymethyltransferase"/>
    <property type="match status" value="1"/>
</dbReference>
<dbReference type="Gene3D" id="3.90.1150.10">
    <property type="entry name" value="Aspartate Aminotransferase, domain 1"/>
    <property type="match status" value="1"/>
</dbReference>
<dbReference type="Gene3D" id="3.40.640.10">
    <property type="entry name" value="Type I PLP-dependent aspartate aminotransferase-like (Major domain)"/>
    <property type="match status" value="1"/>
</dbReference>
<dbReference type="HAMAP" id="MF_00051">
    <property type="entry name" value="SHMT"/>
    <property type="match status" value="1"/>
</dbReference>
<dbReference type="InterPro" id="IPR015424">
    <property type="entry name" value="PyrdxlP-dep_Trfase"/>
</dbReference>
<dbReference type="InterPro" id="IPR015421">
    <property type="entry name" value="PyrdxlP-dep_Trfase_major"/>
</dbReference>
<dbReference type="InterPro" id="IPR015422">
    <property type="entry name" value="PyrdxlP-dep_Trfase_small"/>
</dbReference>
<dbReference type="InterPro" id="IPR001085">
    <property type="entry name" value="Ser_HO-MeTrfase"/>
</dbReference>
<dbReference type="InterPro" id="IPR049943">
    <property type="entry name" value="Ser_HO-MeTrfase-like"/>
</dbReference>
<dbReference type="InterPro" id="IPR019798">
    <property type="entry name" value="Ser_HO-MeTrfase_PLP_BS"/>
</dbReference>
<dbReference type="InterPro" id="IPR039429">
    <property type="entry name" value="SHMT-like_dom"/>
</dbReference>
<dbReference type="NCBIfam" id="NF000586">
    <property type="entry name" value="PRK00011.1"/>
    <property type="match status" value="1"/>
</dbReference>
<dbReference type="PANTHER" id="PTHR11680">
    <property type="entry name" value="SERINE HYDROXYMETHYLTRANSFERASE"/>
    <property type="match status" value="1"/>
</dbReference>
<dbReference type="PANTHER" id="PTHR11680:SF35">
    <property type="entry name" value="SERINE HYDROXYMETHYLTRANSFERASE 1"/>
    <property type="match status" value="1"/>
</dbReference>
<dbReference type="Pfam" id="PF00464">
    <property type="entry name" value="SHMT"/>
    <property type="match status" value="1"/>
</dbReference>
<dbReference type="PIRSF" id="PIRSF000412">
    <property type="entry name" value="SHMT"/>
    <property type="match status" value="1"/>
</dbReference>
<dbReference type="SUPFAM" id="SSF53383">
    <property type="entry name" value="PLP-dependent transferases"/>
    <property type="match status" value="1"/>
</dbReference>
<dbReference type="PROSITE" id="PS00096">
    <property type="entry name" value="SHMT"/>
    <property type="match status" value="1"/>
</dbReference>
<evidence type="ECO:0000255" key="1">
    <source>
        <dbReference type="HAMAP-Rule" id="MF_00051"/>
    </source>
</evidence>
<accession>C3P1G5</accession>